<gene>
    <name type="primary">g</name>
    <name type="ORF">CG10986</name>
</gene>
<reference key="1">
    <citation type="journal article" date="1997" name="EMBO J.">
        <title>Altered expression of a novel adaptin leads to defective pigment granule biogenesis in the Drosophila eye color mutant garnet.</title>
        <authorList>
            <person name="Ooi C.E."/>
            <person name="Moreira J.E."/>
            <person name="Dell'Angelica E.C."/>
            <person name="Poy G."/>
            <person name="Wassarman D.A."/>
            <person name="Bonifacino J.S."/>
        </authorList>
    </citation>
    <scope>NUCLEOTIDE SEQUENCE [MRNA]</scope>
    <source>
        <strain>Canton-S</strain>
    </source>
</reference>
<reference key="2">
    <citation type="journal article" date="1999" name="Genome">
        <title>A genetic and molecular characterization of the garnet gene of Drosophila melanogaster.</title>
        <authorList>
            <person name="Lloyd V.K."/>
            <person name="Sinclair D.A."/>
            <person name="Wennberg R."/>
            <person name="Warner T.S."/>
            <person name="Honda B.M."/>
            <person name="Grigliatti T.A."/>
        </authorList>
    </citation>
    <scope>NUCLEOTIDE SEQUENCE [GENOMIC DNA / MRNA]</scope>
    <source>
        <strain>Oregon-R</strain>
    </source>
</reference>
<reference key="3">
    <citation type="journal article" date="2000" name="Science">
        <title>The genome sequence of Drosophila melanogaster.</title>
        <authorList>
            <person name="Adams M.D."/>
            <person name="Celniker S.E."/>
            <person name="Holt R.A."/>
            <person name="Evans C.A."/>
            <person name="Gocayne J.D."/>
            <person name="Amanatides P.G."/>
            <person name="Scherer S.E."/>
            <person name="Li P.W."/>
            <person name="Hoskins R.A."/>
            <person name="Galle R.F."/>
            <person name="George R.A."/>
            <person name="Lewis S.E."/>
            <person name="Richards S."/>
            <person name="Ashburner M."/>
            <person name="Henderson S.N."/>
            <person name="Sutton G.G."/>
            <person name="Wortman J.R."/>
            <person name="Yandell M.D."/>
            <person name="Zhang Q."/>
            <person name="Chen L.X."/>
            <person name="Brandon R.C."/>
            <person name="Rogers Y.-H.C."/>
            <person name="Blazej R.G."/>
            <person name="Champe M."/>
            <person name="Pfeiffer B.D."/>
            <person name="Wan K.H."/>
            <person name="Doyle C."/>
            <person name="Baxter E.G."/>
            <person name="Helt G."/>
            <person name="Nelson C.R."/>
            <person name="Miklos G.L.G."/>
            <person name="Abril J.F."/>
            <person name="Agbayani A."/>
            <person name="An H.-J."/>
            <person name="Andrews-Pfannkoch C."/>
            <person name="Baldwin D."/>
            <person name="Ballew R.M."/>
            <person name="Basu A."/>
            <person name="Baxendale J."/>
            <person name="Bayraktaroglu L."/>
            <person name="Beasley E.M."/>
            <person name="Beeson K.Y."/>
            <person name="Benos P.V."/>
            <person name="Berman B.P."/>
            <person name="Bhandari D."/>
            <person name="Bolshakov S."/>
            <person name="Borkova D."/>
            <person name="Botchan M.R."/>
            <person name="Bouck J."/>
            <person name="Brokstein P."/>
            <person name="Brottier P."/>
            <person name="Burtis K.C."/>
            <person name="Busam D.A."/>
            <person name="Butler H."/>
            <person name="Cadieu E."/>
            <person name="Center A."/>
            <person name="Chandra I."/>
            <person name="Cherry J.M."/>
            <person name="Cawley S."/>
            <person name="Dahlke C."/>
            <person name="Davenport L.B."/>
            <person name="Davies P."/>
            <person name="de Pablos B."/>
            <person name="Delcher A."/>
            <person name="Deng Z."/>
            <person name="Mays A.D."/>
            <person name="Dew I."/>
            <person name="Dietz S.M."/>
            <person name="Dodson K."/>
            <person name="Doup L.E."/>
            <person name="Downes M."/>
            <person name="Dugan-Rocha S."/>
            <person name="Dunkov B.C."/>
            <person name="Dunn P."/>
            <person name="Durbin K.J."/>
            <person name="Evangelista C.C."/>
            <person name="Ferraz C."/>
            <person name="Ferriera S."/>
            <person name="Fleischmann W."/>
            <person name="Fosler C."/>
            <person name="Gabrielian A.E."/>
            <person name="Garg N.S."/>
            <person name="Gelbart W.M."/>
            <person name="Glasser K."/>
            <person name="Glodek A."/>
            <person name="Gong F."/>
            <person name="Gorrell J.H."/>
            <person name="Gu Z."/>
            <person name="Guan P."/>
            <person name="Harris M."/>
            <person name="Harris N.L."/>
            <person name="Harvey D.A."/>
            <person name="Heiman T.J."/>
            <person name="Hernandez J.R."/>
            <person name="Houck J."/>
            <person name="Hostin D."/>
            <person name="Houston K.A."/>
            <person name="Howland T.J."/>
            <person name="Wei M.-H."/>
            <person name="Ibegwam C."/>
            <person name="Jalali M."/>
            <person name="Kalush F."/>
            <person name="Karpen G.H."/>
            <person name="Ke Z."/>
            <person name="Kennison J.A."/>
            <person name="Ketchum K.A."/>
            <person name="Kimmel B.E."/>
            <person name="Kodira C.D."/>
            <person name="Kraft C.L."/>
            <person name="Kravitz S."/>
            <person name="Kulp D."/>
            <person name="Lai Z."/>
            <person name="Lasko P."/>
            <person name="Lei Y."/>
            <person name="Levitsky A.A."/>
            <person name="Li J.H."/>
            <person name="Li Z."/>
            <person name="Liang Y."/>
            <person name="Lin X."/>
            <person name="Liu X."/>
            <person name="Mattei B."/>
            <person name="McIntosh T.C."/>
            <person name="McLeod M.P."/>
            <person name="McPherson D."/>
            <person name="Merkulov G."/>
            <person name="Milshina N.V."/>
            <person name="Mobarry C."/>
            <person name="Morris J."/>
            <person name="Moshrefi A."/>
            <person name="Mount S.M."/>
            <person name="Moy M."/>
            <person name="Murphy B."/>
            <person name="Murphy L."/>
            <person name="Muzny D.M."/>
            <person name="Nelson D.L."/>
            <person name="Nelson D.R."/>
            <person name="Nelson K.A."/>
            <person name="Nixon K."/>
            <person name="Nusskern D.R."/>
            <person name="Pacleb J.M."/>
            <person name="Palazzolo M."/>
            <person name="Pittman G.S."/>
            <person name="Pan S."/>
            <person name="Pollard J."/>
            <person name="Puri V."/>
            <person name="Reese M.G."/>
            <person name="Reinert K."/>
            <person name="Remington K."/>
            <person name="Saunders R.D.C."/>
            <person name="Scheeler F."/>
            <person name="Shen H."/>
            <person name="Shue B.C."/>
            <person name="Siden-Kiamos I."/>
            <person name="Simpson M."/>
            <person name="Skupski M.P."/>
            <person name="Smith T.J."/>
            <person name="Spier E."/>
            <person name="Spradling A.C."/>
            <person name="Stapleton M."/>
            <person name="Strong R."/>
            <person name="Sun E."/>
            <person name="Svirskas R."/>
            <person name="Tector C."/>
            <person name="Turner R."/>
            <person name="Venter E."/>
            <person name="Wang A.H."/>
            <person name="Wang X."/>
            <person name="Wang Z.-Y."/>
            <person name="Wassarman D.A."/>
            <person name="Weinstock G.M."/>
            <person name="Weissenbach J."/>
            <person name="Williams S.M."/>
            <person name="Woodage T."/>
            <person name="Worley K.C."/>
            <person name="Wu D."/>
            <person name="Yang S."/>
            <person name="Yao Q.A."/>
            <person name="Ye J."/>
            <person name="Yeh R.-F."/>
            <person name="Zaveri J.S."/>
            <person name="Zhan M."/>
            <person name="Zhang G."/>
            <person name="Zhao Q."/>
            <person name="Zheng L."/>
            <person name="Zheng X.H."/>
            <person name="Zhong F.N."/>
            <person name="Zhong W."/>
            <person name="Zhou X."/>
            <person name="Zhu S.C."/>
            <person name="Zhu X."/>
            <person name="Smith H.O."/>
            <person name="Gibbs R.A."/>
            <person name="Myers E.W."/>
            <person name="Rubin G.M."/>
            <person name="Venter J.C."/>
        </authorList>
    </citation>
    <scope>NUCLEOTIDE SEQUENCE [LARGE SCALE GENOMIC DNA]</scope>
    <source>
        <strain>Berkeley</strain>
    </source>
</reference>
<reference key="4">
    <citation type="journal article" date="2002" name="Genome Biol.">
        <title>Annotation of the Drosophila melanogaster euchromatic genome: a systematic review.</title>
        <authorList>
            <person name="Misra S."/>
            <person name="Crosby M.A."/>
            <person name="Mungall C.J."/>
            <person name="Matthews B.B."/>
            <person name="Campbell K.S."/>
            <person name="Hradecky P."/>
            <person name="Huang Y."/>
            <person name="Kaminker J.S."/>
            <person name="Millburn G.H."/>
            <person name="Prochnik S.E."/>
            <person name="Smith C.D."/>
            <person name="Tupy J.L."/>
            <person name="Whitfield E.J."/>
            <person name="Bayraktaroglu L."/>
            <person name="Berman B.P."/>
            <person name="Bettencourt B.R."/>
            <person name="Celniker S.E."/>
            <person name="de Grey A.D.N.J."/>
            <person name="Drysdale R.A."/>
            <person name="Harris N.L."/>
            <person name="Richter J."/>
            <person name="Russo S."/>
            <person name="Schroeder A.J."/>
            <person name="Shu S.Q."/>
            <person name="Stapleton M."/>
            <person name="Yamada C."/>
            <person name="Ashburner M."/>
            <person name="Gelbart W.M."/>
            <person name="Rubin G.M."/>
            <person name="Lewis S.E."/>
        </authorList>
    </citation>
    <scope>GENOME REANNOTATION</scope>
    <source>
        <strain>Berkeley</strain>
    </source>
</reference>
<reference key="5">
    <citation type="journal article" date="2007" name="Mol. Biosyst.">
        <title>An integrated chemical, mass spectrometric and computational strategy for (quantitative) phosphoproteomics: application to Drosophila melanogaster Kc167 cells.</title>
        <authorList>
            <person name="Bodenmiller B."/>
            <person name="Mueller L.N."/>
            <person name="Pedrioli P.G.A."/>
            <person name="Pflieger D."/>
            <person name="Juenger M.A."/>
            <person name="Eng J.K."/>
            <person name="Aebersold R."/>
            <person name="Tao W.A."/>
        </authorList>
    </citation>
    <scope>PHOSPHORYLATION [LARGE SCALE ANALYSIS] AT SER-683</scope>
    <scope>IDENTIFICATION BY MASS SPECTROMETRY</scope>
</reference>
<reference key="6">
    <citation type="journal article" date="2008" name="J. Proteome Res.">
        <title>Phosphoproteome analysis of Drosophila melanogaster embryos.</title>
        <authorList>
            <person name="Zhai B."/>
            <person name="Villen J."/>
            <person name="Beausoleil S.A."/>
            <person name="Mintseris J."/>
            <person name="Gygi S.P."/>
        </authorList>
    </citation>
    <scope>PHOSPHORYLATION [LARGE SCALE ANALYSIS] AT SER-683 AND THR-687</scope>
    <scope>IDENTIFICATION BY MASS SPECTROMETRY</scope>
    <source>
        <tissue>Embryo</tissue>
    </source>
</reference>
<protein>
    <recommendedName>
        <fullName>AP-3 complex subunit delta</fullName>
    </recommendedName>
    <alternativeName>
        <fullName>Delta adaptin subunit of AP-3</fullName>
        <shortName>Delta-adaptin</shortName>
    </alternativeName>
    <alternativeName>
        <fullName>Garnet protein</fullName>
    </alternativeName>
</protein>
<name>AP3D_DROME</name>
<comment type="function">
    <text evidence="1">Part of the AP-3 complex, an adapter-related complex which is not clathrin-associated. The complex is associated with the Golgi region as well as more peripheral structures. It facilitates the budding of vesicles from the Golgi membrane and may be directly involved in trafficking to lysosomes (By similarity).</text>
</comment>
<comment type="function">
    <text>May be a coat protein involved in the formation of specialized structures like pigment granules.</text>
</comment>
<comment type="subunit">
    <text>Adaptor protein complex 3 (AP-3) is a heterotetramer composed of two large chains (delta and beta3), a medium chain (mu3) and a small chain (sigma3).</text>
</comment>
<comment type="subcellular location">
    <subcellularLocation>
        <location evidence="1">Cytoplasmic vesicle</location>
        <location evidence="1">Clathrin-coated vesicle membrane</location>
        <topology evidence="1">Peripheral membrane protein</topology>
        <orientation evidence="1">Cytoplasmic side</orientation>
    </subcellularLocation>
    <subcellularLocation>
        <location evidence="1">Golgi apparatus</location>
    </subcellularLocation>
    <text evidence="1">Component of the coat surrounding the cytoplasmic face of coated vesicles located at the Golgi complex.</text>
</comment>
<comment type="similarity">
    <text evidence="5">Belongs to the adaptor complexes large subunit family.</text>
</comment>
<comment type="sequence caution" evidence="5">
    <conflict type="miscellaneous discrepancy">
        <sequence resource="EMBL-CDS" id="AAB97618"/>
    </conflict>
    <text>Intron retention. This sequence is incomplete at 5'- and 3'-ends and extensively differs from that shown at positions 1-269, 546 and 840-1034.</text>
</comment>
<comment type="sequence caution" evidence="5">
    <conflict type="miscellaneous discrepancy">
        <sequence resource="EMBL-CDS" id="AAC01743"/>
    </conflict>
    <text>Intron retention. This sequence is incomplete at 5'- and 3'-ends and extensively differs from that shown at positions 1-269, 546 and 840-1034.</text>
</comment>
<keyword id="KW-0968">Cytoplasmic vesicle</keyword>
<keyword id="KW-0333">Golgi apparatus</keyword>
<keyword id="KW-0472">Membrane</keyword>
<keyword id="KW-0597">Phosphoprotein</keyword>
<keyword id="KW-0653">Protein transport</keyword>
<keyword id="KW-1185">Reference proteome</keyword>
<keyword id="KW-0677">Repeat</keyword>
<keyword id="KW-0813">Transport</keyword>
<proteinExistence type="evidence at protein level"/>
<accession>P54362</accession>
<accession>O16015</accession>
<accession>O45031</accession>
<accession>Q9VY96</accession>
<organism>
    <name type="scientific">Drosophila melanogaster</name>
    <name type="common">Fruit fly</name>
    <dbReference type="NCBI Taxonomy" id="7227"/>
    <lineage>
        <taxon>Eukaryota</taxon>
        <taxon>Metazoa</taxon>
        <taxon>Ecdysozoa</taxon>
        <taxon>Arthropoda</taxon>
        <taxon>Hexapoda</taxon>
        <taxon>Insecta</taxon>
        <taxon>Pterygota</taxon>
        <taxon>Neoptera</taxon>
        <taxon>Endopterygota</taxon>
        <taxon>Diptera</taxon>
        <taxon>Brachycera</taxon>
        <taxon>Muscomorpha</taxon>
        <taxon>Ephydroidea</taxon>
        <taxon>Drosophilidae</taxon>
        <taxon>Drosophila</taxon>
        <taxon>Sophophora</taxon>
    </lineage>
</organism>
<sequence>MALKKVKGNFFERMFDKNLTDLVRGIRNNKDNEAKYISTCIEEIKQELRQDNISVKCNAVAKLTYIQMLGYDISWAGFNIIEVMSSSRFTCKRIGYLAASQCFHPDSELLMLTTNMIRKDLNSQNQYDAGVALSGLSCFISPDLSRDLANDIMTLMSSTKPYLRMKAVLMMYKVFLRYPEALRPAFPKLKEKLEDPDPGVQSAAVNVICELARKNPKNYLPLAPIFFKLMTTSTNNWMLIKIIKLFGALTPLEPRLGKKLIEPLTNLIHSTSAMSLLYECINTVIAVLISISSGMPNHSASIQLCVQKLRILIEDSDQNLKYLGLLAMSKILKTHPKSVQAHKDLILACLDDKDESIRLRALDLLYGMVSKKNLMEIVKRLLGHMERAEGSAYRDELLYKVIEICAQSSYLYVTNFEWYLTVLVELIQLEAGSRHGRLIAEQLLDVAIRVPVVRQFAVNEMTNLLDTFTVSAQSNSMYEVLYAAAWIVGEFAGELEDAEKTLNILLRPRLLPGHIQGVYVQNVIKLFARLATTCLELQDLPGLVTLCDHVLDKLQHFNGSSDIEVQERANSACMLIEMLRNQLSTSTDAMAMDTTTEGGIPPLAIEIVQEMTLLFTGELIPVAPKAQRKVPLPDGLDLDEWINAPPPEDAASSSSSEHDKDELFVSATQAGTGADGGEKRRQSLELTPEQLERQRMARLIEQSNNPHYLKSTPTASGASNADQYDNIDDIPITELPLDMEGVAALRVGITKRSDKYLQEQQAAQGSKDGKKKHKKGKKSKKAKNKVAYNSSSESEGEPKPLHIVNTTLDMPEGVSMSDSEDKDGKYDPNDPHRALDIELDITEFEAPAVRSASKKSAADKENLKTPADLAGGGNAAKKDRKKDKDKDKERKVKREHRESKRERKEAAVQPVIDLIDADTPTPSPSHISATSNNNNTSTVLPDAPKHHKKKKNKEKTTDEAPDALATATGSSIIDVGGEEASEVASKVHKKKHKKEKSQRKEKKKASESASVSAIVSIGDYEQPLGISTPSKEIL</sequence>
<dbReference type="EMBL" id="AF002164">
    <property type="protein sequence ID" value="AAC14585.1"/>
    <property type="molecule type" value="mRNA"/>
</dbReference>
<dbReference type="EMBL" id="AF044287">
    <property type="protein sequence ID" value="AAC01743.1"/>
    <property type="status" value="ALT_SEQ"/>
    <property type="molecule type" value="Genomic_DNA"/>
</dbReference>
<dbReference type="EMBL" id="U31351">
    <property type="protein sequence ID" value="AAB97618.1"/>
    <property type="status" value="ALT_SEQ"/>
    <property type="molecule type" value="mRNA"/>
</dbReference>
<dbReference type="EMBL" id="AE014298">
    <property type="protein sequence ID" value="AAF48307.2"/>
    <property type="molecule type" value="Genomic_DNA"/>
</dbReference>
<dbReference type="RefSeq" id="NP_524785.2">
    <property type="nucleotide sequence ID" value="NM_080046.3"/>
</dbReference>
<dbReference type="SMR" id="P54362"/>
<dbReference type="BioGRID" id="69305">
    <property type="interactions" value="11"/>
</dbReference>
<dbReference type="ComplexPortal" id="CPX-2727">
    <property type="entry name" value="Adaptor complex AP-3"/>
</dbReference>
<dbReference type="FunCoup" id="P54362">
    <property type="interactions" value="2185"/>
</dbReference>
<dbReference type="IntAct" id="P54362">
    <property type="interactions" value="4"/>
</dbReference>
<dbReference type="STRING" id="7227.FBpp0073673"/>
<dbReference type="GlyGen" id="P54362">
    <property type="glycosylation" value="1 site"/>
</dbReference>
<dbReference type="iPTMnet" id="P54362"/>
<dbReference type="PaxDb" id="7227-FBpp0073673"/>
<dbReference type="EnsemblMetazoa" id="FBtr0073842">
    <property type="protein sequence ID" value="FBpp0073673"/>
    <property type="gene ID" value="FBgn0001087"/>
</dbReference>
<dbReference type="GeneID" id="44819"/>
<dbReference type="KEGG" id="dme:Dmel_CG10986"/>
<dbReference type="UCSC" id="CG10986-RB">
    <property type="organism name" value="d. melanogaster"/>
</dbReference>
<dbReference type="AGR" id="FB:FBgn0001087"/>
<dbReference type="CTD" id="44819"/>
<dbReference type="FlyBase" id="FBgn0001087">
    <property type="gene designation" value="g"/>
</dbReference>
<dbReference type="VEuPathDB" id="VectorBase:FBgn0001087"/>
<dbReference type="eggNOG" id="KOG1059">
    <property type="taxonomic scope" value="Eukaryota"/>
</dbReference>
<dbReference type="GeneTree" id="ENSGT00550000075067"/>
<dbReference type="HOGENOM" id="CLU_001908_0_1_1"/>
<dbReference type="InParanoid" id="P54362"/>
<dbReference type="OrthoDB" id="10264595at2759"/>
<dbReference type="PhylomeDB" id="P54362"/>
<dbReference type="SignaLink" id="P54362"/>
<dbReference type="BioGRID-ORCS" id="44819">
    <property type="hits" value="0 hits in 1 CRISPR screen"/>
</dbReference>
<dbReference type="ChiTaRS" id="g">
    <property type="organism name" value="fly"/>
</dbReference>
<dbReference type="GenomeRNAi" id="44819"/>
<dbReference type="PRO" id="PR:P54362"/>
<dbReference type="Proteomes" id="UP000000803">
    <property type="component" value="Chromosome X"/>
</dbReference>
<dbReference type="Bgee" id="FBgn0001087">
    <property type="expression patterns" value="Expressed in lamina monopolar neuron L1 (Drosophila) in insect head and 263 other cell types or tissues"/>
</dbReference>
<dbReference type="ExpressionAtlas" id="P54362">
    <property type="expression patterns" value="baseline and differential"/>
</dbReference>
<dbReference type="GO" id="GO:0030123">
    <property type="term" value="C:AP-3 adaptor complex"/>
    <property type="evidence" value="ECO:0000318"/>
    <property type="project" value="GO_Central"/>
</dbReference>
<dbReference type="GO" id="GO:1904115">
    <property type="term" value="C:axon cytoplasm"/>
    <property type="evidence" value="ECO:0007669"/>
    <property type="project" value="GOC"/>
</dbReference>
<dbReference type="GO" id="GO:0030665">
    <property type="term" value="C:clathrin-coated vesicle membrane"/>
    <property type="evidence" value="ECO:0007669"/>
    <property type="project" value="UniProtKB-SubCell"/>
</dbReference>
<dbReference type="GO" id="GO:0005829">
    <property type="term" value="C:cytosol"/>
    <property type="evidence" value="ECO:0007669"/>
    <property type="project" value="GOC"/>
</dbReference>
<dbReference type="GO" id="GO:0005783">
    <property type="term" value="C:endoplasmic reticulum"/>
    <property type="evidence" value="ECO:0000314"/>
    <property type="project" value="FlyBase"/>
</dbReference>
<dbReference type="GO" id="GO:0010008">
    <property type="term" value="C:endosome membrane"/>
    <property type="evidence" value="ECO:0000318"/>
    <property type="project" value="GO_Central"/>
</dbReference>
<dbReference type="GO" id="GO:0005795">
    <property type="term" value="C:Golgi stack"/>
    <property type="evidence" value="ECO:0000314"/>
    <property type="project" value="FlyBase"/>
</dbReference>
<dbReference type="GO" id="GO:0005798">
    <property type="term" value="C:Golgi-associated vesicle"/>
    <property type="evidence" value="ECO:0000303"/>
    <property type="project" value="UniProtKB"/>
</dbReference>
<dbReference type="GO" id="GO:0005770">
    <property type="term" value="C:late endosome"/>
    <property type="evidence" value="ECO:0000314"/>
    <property type="project" value="FlyBase"/>
</dbReference>
<dbReference type="GO" id="GO:0098830">
    <property type="term" value="C:presynaptic endosome"/>
    <property type="evidence" value="ECO:0000318"/>
    <property type="project" value="GO_Central"/>
</dbReference>
<dbReference type="GO" id="GO:0043195">
    <property type="term" value="C:terminal bouton"/>
    <property type="evidence" value="ECO:0000318"/>
    <property type="project" value="GO_Central"/>
</dbReference>
<dbReference type="GO" id="GO:0140312">
    <property type="term" value="F:cargo adaptor activity"/>
    <property type="evidence" value="ECO:0000250"/>
    <property type="project" value="FlyBase"/>
</dbReference>
<dbReference type="GO" id="GO:0048490">
    <property type="term" value="P:anterograde synaptic vesicle transport"/>
    <property type="evidence" value="ECO:0000318"/>
    <property type="project" value="GO_Central"/>
</dbReference>
<dbReference type="GO" id="GO:0048072">
    <property type="term" value="P:compound eye pigmentation"/>
    <property type="evidence" value="ECO:0000316"/>
    <property type="project" value="FlyBase"/>
</dbReference>
<dbReference type="GO" id="GO:0008340">
    <property type="term" value="P:determination of adult lifespan"/>
    <property type="evidence" value="ECO:0000315"/>
    <property type="project" value="FlyBase"/>
</dbReference>
<dbReference type="GO" id="GO:0006897">
    <property type="term" value="P:endocytosis"/>
    <property type="evidence" value="ECO:0000315"/>
    <property type="project" value="FlyBase"/>
</dbReference>
<dbReference type="GO" id="GO:0006887">
    <property type="term" value="P:exocytosis"/>
    <property type="evidence" value="ECO:0000315"/>
    <property type="project" value="FlyBase"/>
</dbReference>
<dbReference type="GO" id="GO:0006726">
    <property type="term" value="P:eye pigment biosynthetic process"/>
    <property type="evidence" value="ECO:0000315"/>
    <property type="project" value="UniProtKB"/>
</dbReference>
<dbReference type="GO" id="GO:0008057">
    <property type="term" value="P:eye pigment granule organization"/>
    <property type="evidence" value="ECO:0000315"/>
    <property type="project" value="UniProtKB"/>
</dbReference>
<dbReference type="GO" id="GO:0006895">
    <property type="term" value="P:Golgi to endosome transport"/>
    <property type="evidence" value="ECO:0000303"/>
    <property type="project" value="UniProtKB"/>
</dbReference>
<dbReference type="GO" id="GO:0006896">
    <property type="term" value="P:Golgi to vacuole transport"/>
    <property type="evidence" value="ECO:0000318"/>
    <property type="project" value="GO_Central"/>
</dbReference>
<dbReference type="GO" id="GO:0046907">
    <property type="term" value="P:intracellular transport"/>
    <property type="evidence" value="ECO:0000304"/>
    <property type="project" value="FlyBase"/>
</dbReference>
<dbReference type="GO" id="GO:0007041">
    <property type="term" value="P:lysosomal transport"/>
    <property type="evidence" value="ECO:0000304"/>
    <property type="project" value="FlyBase"/>
</dbReference>
<dbReference type="GO" id="GO:0098943">
    <property type="term" value="P:neurotransmitter receptor transport, postsynaptic endosome to lysosome"/>
    <property type="evidence" value="ECO:0000318"/>
    <property type="project" value="GO_Central"/>
</dbReference>
<dbReference type="GO" id="GO:0007220">
    <property type="term" value="P:Notch receptor processing"/>
    <property type="evidence" value="ECO:0000315"/>
    <property type="project" value="FlyBase"/>
</dbReference>
<dbReference type="GO" id="GO:0006727">
    <property type="term" value="P:ommochrome biosynthetic process"/>
    <property type="evidence" value="ECO:0000315"/>
    <property type="project" value="FlyBase"/>
</dbReference>
<dbReference type="GO" id="GO:0006623">
    <property type="term" value="P:protein targeting to vacuole"/>
    <property type="evidence" value="ECO:0000318"/>
    <property type="project" value="GO_Central"/>
</dbReference>
<dbReference type="GO" id="GO:0016182">
    <property type="term" value="P:synaptic vesicle budding from endosome"/>
    <property type="evidence" value="ECO:0000318"/>
    <property type="project" value="GO_Central"/>
</dbReference>
<dbReference type="GO" id="GO:0048499">
    <property type="term" value="P:synaptic vesicle membrane organization"/>
    <property type="evidence" value="ECO:0000318"/>
    <property type="project" value="GO_Central"/>
</dbReference>
<dbReference type="FunFam" id="1.25.10.10:FF:000251">
    <property type="entry name" value="AP-3 complex subunit delta"/>
    <property type="match status" value="1"/>
</dbReference>
<dbReference type="Gene3D" id="1.25.10.10">
    <property type="entry name" value="Leucine-rich Repeat Variant"/>
    <property type="match status" value="1"/>
</dbReference>
<dbReference type="InterPro" id="IPR017105">
    <property type="entry name" value="AP3_complex_dsu"/>
</dbReference>
<dbReference type="InterPro" id="IPR010474">
    <property type="entry name" value="AP3D_dom_metazoa"/>
</dbReference>
<dbReference type="InterPro" id="IPR011989">
    <property type="entry name" value="ARM-like"/>
</dbReference>
<dbReference type="InterPro" id="IPR016024">
    <property type="entry name" value="ARM-type_fold"/>
</dbReference>
<dbReference type="InterPro" id="IPR002553">
    <property type="entry name" value="Clathrin/coatomer_adapt-like_N"/>
</dbReference>
<dbReference type="PANTHER" id="PTHR22781:SF12">
    <property type="entry name" value="AP-3 COMPLEX SUBUNIT DELTA-1"/>
    <property type="match status" value="1"/>
</dbReference>
<dbReference type="PANTHER" id="PTHR22781">
    <property type="entry name" value="DELTA ADAPTIN-RELATED"/>
    <property type="match status" value="1"/>
</dbReference>
<dbReference type="Pfam" id="PF01602">
    <property type="entry name" value="Adaptin_N"/>
    <property type="match status" value="1"/>
</dbReference>
<dbReference type="Pfam" id="PF06375">
    <property type="entry name" value="AP3D1"/>
    <property type="match status" value="1"/>
</dbReference>
<dbReference type="PIRSF" id="PIRSF037092">
    <property type="entry name" value="AP3_complex_delta"/>
    <property type="match status" value="1"/>
</dbReference>
<dbReference type="SMART" id="SM01354">
    <property type="entry name" value="BLVR"/>
    <property type="match status" value="1"/>
</dbReference>
<dbReference type="SUPFAM" id="SSF48371">
    <property type="entry name" value="ARM repeat"/>
    <property type="match status" value="1"/>
</dbReference>
<evidence type="ECO:0000250" key="1"/>
<evidence type="ECO:0000256" key="2">
    <source>
        <dbReference type="SAM" id="MobiDB-lite"/>
    </source>
</evidence>
<evidence type="ECO:0000269" key="3">
    <source>
    </source>
</evidence>
<evidence type="ECO:0000269" key="4">
    <source>
    </source>
</evidence>
<evidence type="ECO:0000305" key="5"/>
<feature type="chain" id="PRO_0000193768" description="AP-3 complex subunit delta">
    <location>
        <begin position="1"/>
        <end position="1034"/>
    </location>
</feature>
<feature type="repeat" description="HEAT 1">
    <location>
        <begin position="35"/>
        <end position="72"/>
    </location>
</feature>
<feature type="repeat" description="HEAT 2">
    <location>
        <begin position="143"/>
        <end position="180"/>
    </location>
</feature>
<feature type="repeat" description="HEAT 3">
    <location>
        <begin position="181"/>
        <end position="217"/>
    </location>
</feature>
<feature type="repeat" description="HEAT 4">
    <location>
        <begin position="219"/>
        <end position="255"/>
    </location>
</feature>
<feature type="repeat" description="HEAT 5">
    <location>
        <begin position="258"/>
        <end position="297"/>
    </location>
</feature>
<feature type="repeat" description="HEAT 6">
    <location>
        <begin position="299"/>
        <end position="337"/>
    </location>
</feature>
<feature type="repeat" description="HEAT 7">
    <location>
        <begin position="338"/>
        <end position="374"/>
    </location>
</feature>
<feature type="repeat" description="HEAT 8">
    <location>
        <begin position="376"/>
        <end position="414"/>
    </location>
</feature>
<feature type="repeat" description="HEAT 9">
    <location>
        <begin position="415"/>
        <end position="452"/>
    </location>
</feature>
<feature type="repeat" description="HEAT 10">
    <location>
        <begin position="570"/>
        <end position="609"/>
    </location>
</feature>
<feature type="region of interest" description="Disordered" evidence="2">
    <location>
        <begin position="637"/>
        <end position="660"/>
    </location>
</feature>
<feature type="region of interest" description="Disordered" evidence="2">
    <location>
        <begin position="669"/>
        <end position="688"/>
    </location>
</feature>
<feature type="region of interest" description="Disordered" evidence="2">
    <location>
        <begin position="701"/>
        <end position="723"/>
    </location>
</feature>
<feature type="region of interest" description="Disordered" evidence="2">
    <location>
        <begin position="758"/>
        <end position="1034"/>
    </location>
</feature>
<feature type="compositionally biased region" description="Basic residues" evidence="2">
    <location>
        <begin position="769"/>
        <end position="784"/>
    </location>
</feature>
<feature type="compositionally biased region" description="Basic and acidic residues" evidence="2">
    <location>
        <begin position="822"/>
        <end position="836"/>
    </location>
</feature>
<feature type="compositionally biased region" description="Basic and acidic residues" evidence="2">
    <location>
        <begin position="882"/>
        <end position="906"/>
    </location>
</feature>
<feature type="compositionally biased region" description="Low complexity" evidence="2">
    <location>
        <begin position="928"/>
        <end position="942"/>
    </location>
</feature>
<feature type="compositionally biased region" description="Basic residues" evidence="2">
    <location>
        <begin position="986"/>
        <end position="1003"/>
    </location>
</feature>
<feature type="compositionally biased region" description="Low complexity" evidence="2">
    <location>
        <begin position="1007"/>
        <end position="1016"/>
    </location>
</feature>
<feature type="compositionally biased region" description="Polar residues" evidence="2">
    <location>
        <begin position="1025"/>
        <end position="1034"/>
    </location>
</feature>
<feature type="modified residue" description="Phosphoserine" evidence="3 4">
    <location>
        <position position="683"/>
    </location>
</feature>
<feature type="modified residue" description="Phosphothreonine" evidence="4">
    <location>
        <position position="687"/>
    </location>
</feature>
<feature type="sequence conflict" description="In Ref. 2; AAC01743." evidence="5" ref="2">
    <original>D</original>
    <variation>T</variation>
    <location>
        <position position="395"/>
    </location>
</feature>
<feature type="sequence conflict" description="In Ref. 2; AAC01743." evidence="5" ref="2">
    <original>L</original>
    <variation>V</variation>
    <location>
        <position position="423"/>
    </location>
</feature>
<feature type="sequence conflict" description="In Ref. 2; AAC01743." evidence="5" ref="2">
    <original>QLLD</original>
    <variation>RTTY</variation>
    <location>
        <begin position="442"/>
        <end position="445"/>
    </location>
</feature>
<feature type="sequence conflict" description="In Ref. 2; AAC01743." evidence="5" ref="2">
    <original>MTNLL</original>
    <variation>IDQSA</variation>
    <location>
        <begin position="461"/>
        <end position="465"/>
    </location>
</feature>
<feature type="sequence conflict" description="In Ref. 2; AAC01743." evidence="5" ref="2">
    <original>QR</original>
    <variation>GQ</variation>
    <location>
        <begin position="694"/>
        <end position="695"/>
    </location>
</feature>
<feature type="sequence conflict" description="In Ref. 1; AAC14585." evidence="5" ref="1">
    <original>E</original>
    <variation>D</variation>
    <location>
        <position position="701"/>
    </location>
</feature>
<feature type="sequence conflict" description="In Ref. 3; AAF48307." evidence="5" ref="3">
    <original>L</original>
    <variation>S</variation>
    <location>
        <position position="869"/>
    </location>
</feature>
<feature type="sequence conflict" description="In Ref. 3; AAF48307." evidence="5" ref="3">
    <original>P</original>
    <variation>S</variation>
    <location>
        <position position="910"/>
    </location>
</feature>